<accession>Q9VYX1</accession>
<feature type="chain" id="PRO_0000314134" description="Enhancer of yellow 2 transcription factor">
    <location>
        <begin position="1"/>
        <end position="101"/>
    </location>
</feature>
<gene>
    <name evidence="1" type="primary">e(y)2</name>
    <name type="synonym">ENY2</name>
    <name type="ORF">CG15191</name>
</gene>
<dbReference type="EMBL" id="AF173294">
    <property type="protein sequence ID" value="AAF89805.1"/>
    <property type="molecule type" value="Genomic_DNA"/>
</dbReference>
<dbReference type="EMBL" id="AF173295">
    <property type="protein sequence ID" value="AAF89806.1"/>
    <property type="molecule type" value="mRNA"/>
</dbReference>
<dbReference type="EMBL" id="AE014298">
    <property type="protein sequence ID" value="AAF48062.1"/>
    <property type="molecule type" value="Genomic_DNA"/>
</dbReference>
<dbReference type="EMBL" id="BT022196">
    <property type="protein sequence ID" value="AAY51590.1"/>
    <property type="molecule type" value="mRNA"/>
</dbReference>
<dbReference type="RefSeq" id="NP_524846.1">
    <property type="nucleotide sequence ID" value="NM_080107.3"/>
</dbReference>
<dbReference type="SMR" id="Q9VYX1"/>
<dbReference type="BioGRID" id="69925">
    <property type="interactions" value="59"/>
</dbReference>
<dbReference type="ComplexPortal" id="CPX-2263">
    <property type="entry name" value="TREX-2 transcription-export complex"/>
</dbReference>
<dbReference type="ComplexPortal" id="CPX-2644">
    <property type="entry name" value="SAGA complex"/>
</dbReference>
<dbReference type="FunCoup" id="Q9VYX1">
    <property type="interactions" value="1646"/>
</dbReference>
<dbReference type="IntAct" id="Q9VYX1">
    <property type="interactions" value="16"/>
</dbReference>
<dbReference type="MINT" id="Q9VYX1"/>
<dbReference type="STRING" id="7227.FBpp0073385"/>
<dbReference type="PaxDb" id="7227-FBpp0073385"/>
<dbReference type="DNASU" id="45848"/>
<dbReference type="EnsemblMetazoa" id="FBtr0073540">
    <property type="protein sequence ID" value="FBpp0073385"/>
    <property type="gene ID" value="FBgn0000618"/>
</dbReference>
<dbReference type="GeneID" id="45848"/>
<dbReference type="KEGG" id="dme:Dmel_CG15191"/>
<dbReference type="AGR" id="FB:FBgn0000618"/>
<dbReference type="CTD" id="45848"/>
<dbReference type="FlyBase" id="FBgn0000618">
    <property type="gene designation" value="e(y)2"/>
</dbReference>
<dbReference type="VEuPathDB" id="VectorBase:FBgn0000618"/>
<dbReference type="eggNOG" id="KOG4479">
    <property type="taxonomic scope" value="Eukaryota"/>
</dbReference>
<dbReference type="GeneTree" id="ENSGT00390000011748"/>
<dbReference type="HOGENOM" id="CLU_134052_1_2_1"/>
<dbReference type="InParanoid" id="Q9VYX1"/>
<dbReference type="OMA" id="RLMCRNI"/>
<dbReference type="OrthoDB" id="6221744at2759"/>
<dbReference type="PhylomeDB" id="Q9VYX1"/>
<dbReference type="BioGRID-ORCS" id="45848">
    <property type="hits" value="1 hit in 1 CRISPR screen"/>
</dbReference>
<dbReference type="GenomeRNAi" id="45848"/>
<dbReference type="PRO" id="PR:Q9VYX1"/>
<dbReference type="Proteomes" id="UP000000803">
    <property type="component" value="Chromosome X"/>
</dbReference>
<dbReference type="Bgee" id="FBgn0000618">
    <property type="expression patterns" value="Expressed in saliva-secreting gland and 72 other cell types or tissues"/>
</dbReference>
<dbReference type="ExpressionAtlas" id="Q9VYX1">
    <property type="expression patterns" value="baseline and differential"/>
</dbReference>
<dbReference type="GO" id="GO:0000785">
    <property type="term" value="C:chromatin"/>
    <property type="evidence" value="ECO:0000314"/>
    <property type="project" value="FlyBase"/>
</dbReference>
<dbReference type="GO" id="GO:0005737">
    <property type="term" value="C:cytoplasm"/>
    <property type="evidence" value="ECO:0007669"/>
    <property type="project" value="UniProtKB-SubCell"/>
</dbReference>
<dbReference type="GO" id="GO:0071819">
    <property type="term" value="C:DUBm complex"/>
    <property type="evidence" value="ECO:0000314"/>
    <property type="project" value="FlyBase"/>
</dbReference>
<dbReference type="GO" id="GO:0031965">
    <property type="term" value="C:nuclear membrane"/>
    <property type="evidence" value="ECO:0007669"/>
    <property type="project" value="UniProtKB-SubCell"/>
</dbReference>
<dbReference type="GO" id="GO:0034399">
    <property type="term" value="C:nuclear periphery"/>
    <property type="evidence" value="ECO:0000314"/>
    <property type="project" value="FlyBase"/>
</dbReference>
<dbReference type="GO" id="GO:0005643">
    <property type="term" value="C:nuclear pore"/>
    <property type="evidence" value="ECO:0000314"/>
    <property type="project" value="UniProtKB"/>
</dbReference>
<dbReference type="GO" id="GO:0005654">
    <property type="term" value="C:nucleoplasm"/>
    <property type="evidence" value="ECO:0007669"/>
    <property type="project" value="UniProtKB-SubCell"/>
</dbReference>
<dbReference type="GO" id="GO:0005634">
    <property type="term" value="C:nucleus"/>
    <property type="evidence" value="ECO:0000314"/>
    <property type="project" value="UniProtKB"/>
</dbReference>
<dbReference type="GO" id="GO:0000124">
    <property type="term" value="C:SAGA complex"/>
    <property type="evidence" value="ECO:0000314"/>
    <property type="project" value="UniProtKB"/>
</dbReference>
<dbReference type="GO" id="GO:0070390">
    <property type="term" value="C:transcription export complex 2"/>
    <property type="evidence" value="ECO:0000314"/>
    <property type="project" value="FlyBase"/>
</dbReference>
<dbReference type="GO" id="GO:0070742">
    <property type="term" value="F:C2H2 zinc finger domain binding"/>
    <property type="evidence" value="ECO:0000353"/>
    <property type="project" value="FlyBase"/>
</dbReference>
<dbReference type="GO" id="GO:0003682">
    <property type="term" value="F:chromatin binding"/>
    <property type="evidence" value="ECO:0000314"/>
    <property type="project" value="FlyBase"/>
</dbReference>
<dbReference type="GO" id="GO:0043035">
    <property type="term" value="F:chromatin insulator sequence binding"/>
    <property type="evidence" value="ECO:0000314"/>
    <property type="project" value="UniProtKB"/>
</dbReference>
<dbReference type="GO" id="GO:0001094">
    <property type="term" value="F:TFIID-class transcription factor complex binding"/>
    <property type="evidence" value="ECO:0000353"/>
    <property type="project" value="FlyBase"/>
</dbReference>
<dbReference type="GO" id="GO:0003713">
    <property type="term" value="F:transcription coactivator activity"/>
    <property type="evidence" value="ECO:0000318"/>
    <property type="project" value="GO_Central"/>
</dbReference>
<dbReference type="GO" id="GO:0033696">
    <property type="term" value="P:heterochromatin boundary formation"/>
    <property type="evidence" value="ECO:0000315"/>
    <property type="project" value="FlyBase"/>
</dbReference>
<dbReference type="GO" id="GO:0006406">
    <property type="term" value="P:mRNA export from nucleus"/>
    <property type="evidence" value="ECO:0000314"/>
    <property type="project" value="FlyBase"/>
</dbReference>
<dbReference type="GO" id="GO:0016973">
    <property type="term" value="P:poly(A)+ mRNA export from nucleus"/>
    <property type="evidence" value="ECO:0000315"/>
    <property type="project" value="FlyBase"/>
</dbReference>
<dbReference type="GO" id="GO:0045893">
    <property type="term" value="P:positive regulation of DNA-templated transcription"/>
    <property type="evidence" value="ECO:0000315"/>
    <property type="project" value="UniProtKB"/>
</dbReference>
<dbReference type="GO" id="GO:0045944">
    <property type="term" value="P:positive regulation of transcription by RNA polymerase II"/>
    <property type="evidence" value="ECO:0000315"/>
    <property type="project" value="UniProtKB"/>
</dbReference>
<dbReference type="GO" id="GO:0006357">
    <property type="term" value="P:regulation of transcription by RNA polymerase II"/>
    <property type="evidence" value="ECO:0000318"/>
    <property type="project" value="GO_Central"/>
</dbReference>
<dbReference type="GO" id="GO:0006368">
    <property type="term" value="P:transcription elongation by RNA polymerase II"/>
    <property type="evidence" value="ECO:0007669"/>
    <property type="project" value="UniProtKB-UniRule"/>
</dbReference>
<dbReference type="FunFam" id="1.10.246.140:FF:000002">
    <property type="entry name" value="Enhancer of yellow 2 transcription factor"/>
    <property type="match status" value="1"/>
</dbReference>
<dbReference type="Gene3D" id="1.10.246.140">
    <property type="match status" value="1"/>
</dbReference>
<dbReference type="HAMAP" id="MF_03046">
    <property type="entry name" value="ENY2_Sus1"/>
    <property type="match status" value="1"/>
</dbReference>
<dbReference type="InterPro" id="IPR018783">
    <property type="entry name" value="TF_ENY2"/>
</dbReference>
<dbReference type="InterPro" id="IPR038212">
    <property type="entry name" value="TF_EnY2_sf"/>
</dbReference>
<dbReference type="PANTHER" id="PTHR12514">
    <property type="entry name" value="ENHANCER OF YELLOW 2 TRANSCRIPTION FACTOR"/>
    <property type="match status" value="1"/>
</dbReference>
<dbReference type="Pfam" id="PF10163">
    <property type="entry name" value="EnY2"/>
    <property type="match status" value="1"/>
</dbReference>
<name>ENY2_DROME</name>
<comment type="function">
    <text evidence="2 3 4 5 6 7 8 9">Involved in mRNA export coupled transcription activation by association with both the TREX-2/AMEX and the SAGA complexes (PubMed:18034162, PubMed:19947544, PubMed:27016737). The SAGA complex is a multiprotein complex that activates transcription by remodeling chromatin and mediating histone acetylation and deubiquitination (PubMed:11438676, PubMed:18206972). Within the SAGA complex, participates in a subcomplex that specifically deubiquitinates histone H2B (PubMed:18206972). The SAGA complex is recruited to specific gene promoters by activators, where it is required for transcription (PubMed:18034162, PubMed:19947544). Required for nuclear receptor-mediated transactivation (PubMed:20048002, PubMed:20714859). Involved in transcription elongation by recruiting the THO complex onto nascent mRNA (PubMed:20048002). The TREX-2/AMEX complex functions in docking export-competent ribonucleoprotein particles (mRNPs) to the nuclear entrance of the nuclear pore complex (nuclear basket) (PubMed:27016737). TREX-2/AMEX participates in mRNA export and accurate chromatin positioning in the nucleus by tethering genes to the nuclear periphery (PubMed:17643381, PubMed:27016737). Recruited to the su(Hw) insulators via its interaction with su(Hw) and participates in the barrier activity of such insulators (PubMed:17643381). In contrast, it does not participate in the enhancer-blocking activity of the su(Hw) insulators (PubMed:17643381).</text>
</comment>
<comment type="subunit">
    <text evidence="1 2 3 4 6 7 8 9 10 11">Component of the nuclear pore complex (NPC)-associated TREX-2/AMEX complex (anchoring and mRNA export complex), composed of e(y)2, xmas and PCID2 (PubMed:18034162, PubMed:27016737). Within the TREX-2/ AMEX complex, interactions with xmas is required for localization to the nuclear periphery (PubMed:18034162). Component of the SAGA transcription coactivator-HAT complexes, at least composed of Ada2b, e(y)2, Pcaf/Gcn5, Taf10 and Nipped-A/Trrap (PubMed:18034162, PubMed:19947544). Within the SAGA complex, e(y)2, Sgf11, and not/nonstop form an additional subcomplex of SAGA called the DUB module (deubiquitination module) (By similarity). Component of the THO complex, composed of at least e(y)2, HPR1, THO2, THOC5, THOC6 and THOC7 (PubMed:20048002, PubMed:20714859). Interacts with Taf9 (PubMed:11438676). Interacts with su(Hw) (via zinc fingers) (PubMed:17643381). Interacts with the nuclear pore complex (NPC) (PubMed:18034162, PubMed:20048002). Interaction between the TREX-2/AMEX complex and the ORC complex is required for ORC localization to mRNPs, and consequently mRNA export (PubMed:27016737, Ref.11). Within the TREX-2/AMEX-ORC complex, interacts with Orc6 and (via N-terminus or C-terminus) with Orc3 (PubMed:27016737, Ref.11). Interacts with the zinc finger protein CG9890 (PubMed:30713769).</text>
</comment>
<comment type="interaction">
    <interactant intactId="EBI-2549759">
        <id>Q9VYX1</id>
    </interactant>
    <interactant intactId="EBI-156824">
        <id>Q9VZJ9</id>
        <label>Mul1</label>
    </interactant>
    <organismsDiffer>false</organismsDiffer>
    <experiments>4</experiments>
</comment>
<comment type="interaction">
    <interactant intactId="EBI-2549759">
        <id>Q9VYX1</id>
    </interactant>
    <interactant intactId="EBI-15108291">
        <id>Q9VRY7</id>
        <label>Rsph3</label>
    </interactant>
    <organismsDiffer>false</organismsDiffer>
    <experiments>4</experiments>
</comment>
<comment type="interaction">
    <interactant intactId="EBI-2549759">
        <id>Q9VYX1</id>
    </interactant>
    <interactant intactId="EBI-150527">
        <id>Q9VVR6</id>
        <label>Sgf11</label>
    </interactant>
    <organismsDiffer>false</organismsDiffer>
    <experiments>3</experiments>
</comment>
<comment type="interaction">
    <interactant intactId="EBI-2549759">
        <id>Q9VYX1</id>
    </interactant>
    <interactant intactId="EBI-2550689">
        <id>Q9U3V9</id>
        <label>xmas</label>
    </interactant>
    <organismsDiffer>false</organismsDiffer>
    <experiments>5</experiments>
</comment>
<comment type="subcellular location">
    <subcellularLocation>
        <location evidence="1 3 7">Nucleus</location>
        <location evidence="1 3 7">Nucleoplasm</location>
    </subcellularLocation>
    <subcellularLocation>
        <location evidence="1 9">Cytoplasm</location>
    </subcellularLocation>
    <subcellularLocation>
        <location evidence="4 7 9">Nucleus membrane</location>
        <topology evidence="4 7 9">Peripheral membrane protein</topology>
    </subcellularLocation>
    <subcellularLocation>
        <location evidence="11">Nucleus</location>
    </subcellularLocation>
    <text evidence="4 7">Localizes to nuclear periphery, in contact with the nuclear pore complex (NPC).</text>
</comment>
<comment type="tissue specificity">
    <text evidence="2">Ubiquitous.</text>
</comment>
<comment type="developmental stage">
    <text evidence="2 9 11">Detected in embryos (at protein level) (PubMed:27016737, Ref.11). Expressed at all stages of development (PubMed:11438676).</text>
</comment>
<comment type="similarity">
    <text evidence="1">Belongs to the ENY2 family.</text>
</comment>
<protein>
    <recommendedName>
        <fullName evidence="1">Enhancer of yellow 2 transcription factor</fullName>
    </recommendedName>
</protein>
<sequence>MSTSGAVDQYTVLTGDRSKIKDLLCSRLTECGWRDEVRLMCRNILMEKGTNNSFTVEQLIAEVTPKARTLVPDAVKKELLMKIRTILTEIEEEPDEPEDES</sequence>
<evidence type="ECO:0000255" key="1">
    <source>
        <dbReference type="HAMAP-Rule" id="MF_03046"/>
    </source>
</evidence>
<evidence type="ECO:0000269" key="2">
    <source>
    </source>
</evidence>
<evidence type="ECO:0000269" key="3">
    <source>
    </source>
</evidence>
<evidence type="ECO:0000269" key="4">
    <source>
    </source>
</evidence>
<evidence type="ECO:0000269" key="5">
    <source>
    </source>
</evidence>
<evidence type="ECO:0000269" key="6">
    <source>
    </source>
</evidence>
<evidence type="ECO:0000269" key="7">
    <source>
    </source>
</evidence>
<evidence type="ECO:0000269" key="8">
    <source>
    </source>
</evidence>
<evidence type="ECO:0000269" key="9">
    <source>
    </source>
</evidence>
<evidence type="ECO:0000269" key="10">
    <source>
    </source>
</evidence>
<evidence type="ECO:0000269" key="11">
    <source ref="11"/>
</evidence>
<reference key="1">
    <citation type="journal article" date="2001" name="Mol. Cell. Biol.">
        <title>The novel transcription factor e(y)2 interacts with TAF(II)40 and potentiates transcription activation on chromatin templates.</title>
        <authorList>
            <person name="Georgieva S."/>
            <person name="Nabirochkina E."/>
            <person name="Dilworth F.J."/>
            <person name="Eickhoff H."/>
            <person name="Becker P."/>
            <person name="Tora L."/>
            <person name="Georgiev P."/>
            <person name="Soldatov A."/>
        </authorList>
    </citation>
    <scope>NUCLEOTIDE SEQUENCE [MRNA]</scope>
    <scope>FUNCTION</scope>
    <scope>SUBCELLULAR LOCATION</scope>
    <scope>TISSUE SPECIFICITY</scope>
    <scope>DEVELOPMENTAL STAGE</scope>
    <scope>INTERACTION WITH TAF9</scope>
</reference>
<reference key="2">
    <citation type="journal article" date="2000" name="Science">
        <title>The genome sequence of Drosophila melanogaster.</title>
        <authorList>
            <person name="Adams M.D."/>
            <person name="Celniker S.E."/>
            <person name="Holt R.A."/>
            <person name="Evans C.A."/>
            <person name="Gocayne J.D."/>
            <person name="Amanatides P.G."/>
            <person name="Scherer S.E."/>
            <person name="Li P.W."/>
            <person name="Hoskins R.A."/>
            <person name="Galle R.F."/>
            <person name="George R.A."/>
            <person name="Lewis S.E."/>
            <person name="Richards S."/>
            <person name="Ashburner M."/>
            <person name="Henderson S.N."/>
            <person name="Sutton G.G."/>
            <person name="Wortman J.R."/>
            <person name="Yandell M.D."/>
            <person name="Zhang Q."/>
            <person name="Chen L.X."/>
            <person name="Brandon R.C."/>
            <person name="Rogers Y.-H.C."/>
            <person name="Blazej R.G."/>
            <person name="Champe M."/>
            <person name="Pfeiffer B.D."/>
            <person name="Wan K.H."/>
            <person name="Doyle C."/>
            <person name="Baxter E.G."/>
            <person name="Helt G."/>
            <person name="Nelson C.R."/>
            <person name="Miklos G.L.G."/>
            <person name="Abril J.F."/>
            <person name="Agbayani A."/>
            <person name="An H.-J."/>
            <person name="Andrews-Pfannkoch C."/>
            <person name="Baldwin D."/>
            <person name="Ballew R.M."/>
            <person name="Basu A."/>
            <person name="Baxendale J."/>
            <person name="Bayraktaroglu L."/>
            <person name="Beasley E.M."/>
            <person name="Beeson K.Y."/>
            <person name="Benos P.V."/>
            <person name="Berman B.P."/>
            <person name="Bhandari D."/>
            <person name="Bolshakov S."/>
            <person name="Borkova D."/>
            <person name="Botchan M.R."/>
            <person name="Bouck J."/>
            <person name="Brokstein P."/>
            <person name="Brottier P."/>
            <person name="Burtis K.C."/>
            <person name="Busam D.A."/>
            <person name="Butler H."/>
            <person name="Cadieu E."/>
            <person name="Center A."/>
            <person name="Chandra I."/>
            <person name="Cherry J.M."/>
            <person name="Cawley S."/>
            <person name="Dahlke C."/>
            <person name="Davenport L.B."/>
            <person name="Davies P."/>
            <person name="de Pablos B."/>
            <person name="Delcher A."/>
            <person name="Deng Z."/>
            <person name="Mays A.D."/>
            <person name="Dew I."/>
            <person name="Dietz S.M."/>
            <person name="Dodson K."/>
            <person name="Doup L.E."/>
            <person name="Downes M."/>
            <person name="Dugan-Rocha S."/>
            <person name="Dunkov B.C."/>
            <person name="Dunn P."/>
            <person name="Durbin K.J."/>
            <person name="Evangelista C.C."/>
            <person name="Ferraz C."/>
            <person name="Ferriera S."/>
            <person name="Fleischmann W."/>
            <person name="Fosler C."/>
            <person name="Gabrielian A.E."/>
            <person name="Garg N.S."/>
            <person name="Gelbart W.M."/>
            <person name="Glasser K."/>
            <person name="Glodek A."/>
            <person name="Gong F."/>
            <person name="Gorrell J.H."/>
            <person name="Gu Z."/>
            <person name="Guan P."/>
            <person name="Harris M."/>
            <person name="Harris N.L."/>
            <person name="Harvey D.A."/>
            <person name="Heiman T.J."/>
            <person name="Hernandez J.R."/>
            <person name="Houck J."/>
            <person name="Hostin D."/>
            <person name="Houston K.A."/>
            <person name="Howland T.J."/>
            <person name="Wei M.-H."/>
            <person name="Ibegwam C."/>
            <person name="Jalali M."/>
            <person name="Kalush F."/>
            <person name="Karpen G.H."/>
            <person name="Ke Z."/>
            <person name="Kennison J.A."/>
            <person name="Ketchum K.A."/>
            <person name="Kimmel B.E."/>
            <person name="Kodira C.D."/>
            <person name="Kraft C.L."/>
            <person name="Kravitz S."/>
            <person name="Kulp D."/>
            <person name="Lai Z."/>
            <person name="Lasko P."/>
            <person name="Lei Y."/>
            <person name="Levitsky A.A."/>
            <person name="Li J.H."/>
            <person name="Li Z."/>
            <person name="Liang Y."/>
            <person name="Lin X."/>
            <person name="Liu X."/>
            <person name="Mattei B."/>
            <person name="McIntosh T.C."/>
            <person name="McLeod M.P."/>
            <person name="McPherson D."/>
            <person name="Merkulov G."/>
            <person name="Milshina N.V."/>
            <person name="Mobarry C."/>
            <person name="Morris J."/>
            <person name="Moshrefi A."/>
            <person name="Mount S.M."/>
            <person name="Moy M."/>
            <person name="Murphy B."/>
            <person name="Murphy L."/>
            <person name="Muzny D.M."/>
            <person name="Nelson D.L."/>
            <person name="Nelson D.R."/>
            <person name="Nelson K.A."/>
            <person name="Nixon K."/>
            <person name="Nusskern D.R."/>
            <person name="Pacleb J.M."/>
            <person name="Palazzolo M."/>
            <person name="Pittman G.S."/>
            <person name="Pan S."/>
            <person name="Pollard J."/>
            <person name="Puri V."/>
            <person name="Reese M.G."/>
            <person name="Reinert K."/>
            <person name="Remington K."/>
            <person name="Saunders R.D.C."/>
            <person name="Scheeler F."/>
            <person name="Shen H."/>
            <person name="Shue B.C."/>
            <person name="Siden-Kiamos I."/>
            <person name="Simpson M."/>
            <person name="Skupski M.P."/>
            <person name="Smith T.J."/>
            <person name="Spier E."/>
            <person name="Spradling A.C."/>
            <person name="Stapleton M."/>
            <person name="Strong R."/>
            <person name="Sun E."/>
            <person name="Svirskas R."/>
            <person name="Tector C."/>
            <person name="Turner R."/>
            <person name="Venter E."/>
            <person name="Wang A.H."/>
            <person name="Wang X."/>
            <person name="Wang Z.-Y."/>
            <person name="Wassarman D.A."/>
            <person name="Weinstock G.M."/>
            <person name="Weissenbach J."/>
            <person name="Williams S.M."/>
            <person name="Woodage T."/>
            <person name="Worley K.C."/>
            <person name="Wu D."/>
            <person name="Yang S."/>
            <person name="Yao Q.A."/>
            <person name="Ye J."/>
            <person name="Yeh R.-F."/>
            <person name="Zaveri J.S."/>
            <person name="Zhan M."/>
            <person name="Zhang G."/>
            <person name="Zhao Q."/>
            <person name="Zheng L."/>
            <person name="Zheng X.H."/>
            <person name="Zhong F.N."/>
            <person name="Zhong W."/>
            <person name="Zhou X."/>
            <person name="Zhu S.C."/>
            <person name="Zhu X."/>
            <person name="Smith H.O."/>
            <person name="Gibbs R.A."/>
            <person name="Myers E.W."/>
            <person name="Rubin G.M."/>
            <person name="Venter J.C."/>
        </authorList>
    </citation>
    <scope>NUCLEOTIDE SEQUENCE [LARGE SCALE GENOMIC DNA]</scope>
    <source>
        <strain>Berkeley</strain>
    </source>
</reference>
<reference key="3">
    <citation type="journal article" date="2002" name="Genome Biol.">
        <title>Annotation of the Drosophila melanogaster euchromatic genome: a systematic review.</title>
        <authorList>
            <person name="Misra S."/>
            <person name="Crosby M.A."/>
            <person name="Mungall C.J."/>
            <person name="Matthews B.B."/>
            <person name="Campbell K.S."/>
            <person name="Hradecky P."/>
            <person name="Huang Y."/>
            <person name="Kaminker J.S."/>
            <person name="Millburn G.H."/>
            <person name="Prochnik S.E."/>
            <person name="Smith C.D."/>
            <person name="Tupy J.L."/>
            <person name="Whitfield E.J."/>
            <person name="Bayraktaroglu L."/>
            <person name="Berman B.P."/>
            <person name="Bettencourt B.R."/>
            <person name="Celniker S.E."/>
            <person name="de Grey A.D.N.J."/>
            <person name="Drysdale R.A."/>
            <person name="Harris N.L."/>
            <person name="Richter J."/>
            <person name="Russo S."/>
            <person name="Schroeder A.J."/>
            <person name="Shu S.Q."/>
            <person name="Stapleton M."/>
            <person name="Yamada C."/>
            <person name="Ashburner M."/>
            <person name="Gelbart W.M."/>
            <person name="Rubin G.M."/>
            <person name="Lewis S.E."/>
        </authorList>
    </citation>
    <scope>GENOME REANNOTATION</scope>
    <source>
        <strain>Berkeley</strain>
    </source>
</reference>
<reference key="4">
    <citation type="journal article" date="2002" name="Genome Biol.">
        <title>A Drosophila full-length cDNA resource.</title>
        <authorList>
            <person name="Stapleton M."/>
            <person name="Carlson J.W."/>
            <person name="Brokstein P."/>
            <person name="Yu C."/>
            <person name="Champe M."/>
            <person name="George R.A."/>
            <person name="Guarin H."/>
            <person name="Kronmiller B."/>
            <person name="Pacleb J.M."/>
            <person name="Park S."/>
            <person name="Wan K.H."/>
            <person name="Rubin G.M."/>
            <person name="Celniker S.E."/>
        </authorList>
    </citation>
    <scope>NUCLEOTIDE SEQUENCE [LARGE SCALE MRNA]</scope>
    <source>
        <strain>Berkeley</strain>
    </source>
</reference>
<reference key="5">
    <citation type="journal article" date="2007" name="EMBO J.">
        <title>SAGA and a novel Drosophila export complex anchor efficient transcription and mRNA export to NPC.</title>
        <authorList>
            <person name="Kurshakova M.M."/>
            <person name="Krasnov A.N."/>
            <person name="Kopytova D.V."/>
            <person name="Shidlovskii Y.V."/>
            <person name="Nikolenko J.V."/>
            <person name="Nabirochkina E.N."/>
            <person name="Spehner D."/>
            <person name="Schultz P."/>
            <person name="Tora L."/>
            <person name="Georgieva S.G."/>
        </authorList>
    </citation>
    <scope>FUNCTION</scope>
    <scope>IDENTIFICATION IN THE SAGA COMPLEX</scope>
    <scope>IDENTIFICATION IN THE AMEX COMPLEX</scope>
    <scope>SUBCELLULAR LOCATION</scope>
    <scope>INTERACTION WITH XMAS</scope>
</reference>
<reference key="6">
    <citation type="journal article" date="2007" name="Mol. Cell">
        <title>Evolutionarily conserved E(y)2/Sus1 protein is essential for the barrier activity of Su(Hw)-dependent insulators in Drosophila.</title>
        <authorList>
            <person name="Kurshakova M."/>
            <person name="Maksimenko O."/>
            <person name="Golovnin A."/>
            <person name="Pulina M."/>
            <person name="Georgieva S."/>
            <person name="Georgiev P."/>
            <person name="Krasnov A."/>
        </authorList>
    </citation>
    <scope>FUNCTION</scope>
    <scope>SUBCELLULAR LOCATION</scope>
    <scope>INTERACTION WITH SU(HW)</scope>
</reference>
<reference key="7">
    <citation type="journal article" date="2008" name="Mol. Cell">
        <title>A TFTC/STAGA module mediates histone H2A and H2B deubiquitination, coactivates nuclear receptors, and counteracts heterochromatin silencing.</title>
        <authorList>
            <person name="Zhao Y."/>
            <person name="Lang G."/>
            <person name="Ito S."/>
            <person name="Bonnet J."/>
            <person name="Metzger E."/>
            <person name="Sawatsubashi S."/>
            <person name="Suzuki E."/>
            <person name="Le Guezennec X."/>
            <person name="Stunnenberg H.G."/>
            <person name="Krasnov A."/>
            <person name="Georgieva S.G."/>
            <person name="Schuele R."/>
            <person name="Takeyama K."/>
            <person name="Kato S."/>
            <person name="Tora L."/>
            <person name="Devys D."/>
        </authorList>
    </citation>
    <scope>FUNCTION</scope>
</reference>
<reference key="8">
    <citation type="journal article" date="2009" name="Genetika">
        <title>Conservative E(y)2/Sus1 protein is the member of SAGA complex and new nuclear pore-associated complex in Drosophila.</title>
        <authorList>
            <person name="Kurshakova M.M."/>
            <person name="Kopytova D.V."/>
            <person name="Nabirochkina E.N."/>
            <person name="Nikolenko Y.V."/>
            <person name="Shidlovskii Y.V."/>
            <person name="Georgieva S.G."/>
            <person name="Krasnov A.N."/>
        </authorList>
    </citation>
    <scope>FUNCTION</scope>
    <scope>IDENTIFICATION IN THE SAGA COMPLEX</scope>
</reference>
<reference key="9">
    <citation type="journal article" date="2010" name="Dokl. Biochem. Biophys.">
        <title>ENY2 protein forms a part of the THO complex of Drosophila melanogaster.</title>
        <authorList>
            <person name="Gurskiy D.Y."/>
            <person name="Nabirochkina E.N."/>
            <person name="Kopytova D.V."/>
            <person name="Nikolenko Y.V."/>
            <person name="Ilyin Y.V."/>
            <person name="Georgieva S.G."/>
            <person name="Shidlovskii Y.V."/>
        </authorList>
    </citation>
    <scope>FUNCTION</scope>
    <scope>IDENTIFICATION IN THE THO COMPLEX</scope>
    <scope>IDENTIFICATION BY MASS SPECTROMETRY</scope>
</reference>
<reference key="10">
    <citation type="journal article" date="2010" name="Genes Dev.">
        <title>Multifunctional factor ENY2 is associated with the THO complex and promotes its recruitment onto nascent mRNA.</title>
        <authorList>
            <person name="Kopytova D.V."/>
            <person name="Orlova A.V."/>
            <person name="Krasnov A.N."/>
            <person name="Gurskiy D.Y."/>
            <person name="Nikolenko J.V."/>
            <person name="Nabirochkina E.N."/>
            <person name="Shidlovskii Y.V."/>
            <person name="Georgieva S.G."/>
        </authorList>
    </citation>
    <scope>FUNCTION</scope>
    <scope>IDENTIFICATION IN THE THO COMPLEX</scope>
    <scope>IDENTIFICATION BY MASS SPECTROMETRY</scope>
    <scope>SUBCELLULAR LOCATION</scope>
</reference>
<reference key="11">
    <citation type="journal article" date="2016" name="Biochem. Mol. Biol. J.">
        <title>Orc3, A Subunit of Drosophila Pre-Replication Complex Directly Binds mRNA and Interacts with ENY2 Subunit of the TREX-2 mRNA Export Complex.</title>
        <authorList>
            <person name="Popova V."/>
            <person name="Georgieva S."/>
            <person name="Kopytova D."/>
        </authorList>
    </citation>
    <scope>INTERACTION WITH ORC3</scope>
    <scope>SUBCELLULAR LOCATION</scope>
    <scope>DEVELOPMENTAL STAGE</scope>
</reference>
<reference key="12">
    <citation type="journal article" date="2016" name="Nucleic Acids Res.">
        <title>ORC interacts with THSC/TREX-2 and its subunits promote Nxf1 association with mRNP and mRNA export in Drosophila.</title>
        <authorList>
            <person name="Kopytova D."/>
            <person name="Popova V."/>
            <person name="Kurshakova M."/>
            <person name="Shidlovskii Y."/>
            <person name="Nabirochkina E."/>
            <person name="Brechalov A."/>
            <person name="Georgiev G."/>
            <person name="Georgieva S."/>
        </authorList>
    </citation>
    <scope>FUNCTION</scope>
    <scope>IDENTIFICATION IN THE AMEX COMPLEX</scope>
    <scope>INTERACTION WITH ORC3 AND ORC6</scope>
    <scope>DEVELOPMENTAL STAGE</scope>
</reference>
<reference key="13">
    <citation type="journal article" date="2018" name="Acta Naturae">
        <title>Zinc Finger Protein CG9890 - New Component of ENY2-Containing Complexes of Drosophila.</title>
        <authorList>
            <person name="Fursova N.A."/>
            <person name="Nikolenko J.V."/>
            <person name="Soshnikova N.V."/>
            <person name="Mazina M.Y."/>
            <person name="Vorobyova N.E."/>
            <person name="Krasnov A.N."/>
        </authorList>
    </citation>
    <scope>INTERACTION WITH CG9890</scope>
</reference>
<proteinExistence type="evidence at protein level"/>
<organism>
    <name type="scientific">Drosophila melanogaster</name>
    <name type="common">Fruit fly</name>
    <dbReference type="NCBI Taxonomy" id="7227"/>
    <lineage>
        <taxon>Eukaryota</taxon>
        <taxon>Metazoa</taxon>
        <taxon>Ecdysozoa</taxon>
        <taxon>Arthropoda</taxon>
        <taxon>Hexapoda</taxon>
        <taxon>Insecta</taxon>
        <taxon>Pterygota</taxon>
        <taxon>Neoptera</taxon>
        <taxon>Endopterygota</taxon>
        <taxon>Diptera</taxon>
        <taxon>Brachycera</taxon>
        <taxon>Muscomorpha</taxon>
        <taxon>Ephydroidea</taxon>
        <taxon>Drosophilidae</taxon>
        <taxon>Drosophila</taxon>
        <taxon>Sophophora</taxon>
    </lineage>
</organism>
<keyword id="KW-0010">Activator</keyword>
<keyword id="KW-0156">Chromatin regulator</keyword>
<keyword id="KW-0963">Cytoplasm</keyword>
<keyword id="KW-0472">Membrane</keyword>
<keyword id="KW-0539">Nucleus</keyword>
<keyword id="KW-1185">Reference proteome</keyword>
<keyword id="KW-0804">Transcription</keyword>
<keyword id="KW-0805">Transcription regulation</keyword>